<sequence>MVKETTYYDVLGVKPNATQEELKKAYRKLALKYHPDKNPNEGEKFKQISQAYEVLADSKKRELYDKGGEQAIKEGGAGGGFGSPMDIFDMFFGGGGRMQRERRGKNVVHQLSVTLEDLYNGATRKLALQKNVICDKCEGRGGKKGAVECCPNCRGTGMQIRIHQIGPGMVQQIQSVCMECQGHGERISPKDRCKSCNGRKIVREKKILEVHIDKGMKDGQKITFHGEGDQEPGLEPGDIIIVLDQKDHAVFTRRGEDLFMCMDIQLVEALCGFQKPISTLDNRTIVITSHPGQIVKHGDIKCVLNEGMPIYRRPYEKGRLIIEFKVNFPENGFLSPDKLSLLEKLLPERKEVEETDEMDQVELVDFDPNQERRRHYNGEAYEDDEHHPRGGVQCQTS</sequence>
<name>DNJA1_MOUSE</name>
<keyword id="KW-0007">Acetylation</keyword>
<keyword id="KW-0143">Chaperone</keyword>
<keyword id="KW-0963">Cytoplasm</keyword>
<keyword id="KW-0903">Direct protein sequencing</keyword>
<keyword id="KW-0256">Endoplasmic reticulum</keyword>
<keyword id="KW-0449">Lipoprotein</keyword>
<keyword id="KW-0472">Membrane</keyword>
<keyword id="KW-0479">Metal-binding</keyword>
<keyword id="KW-0488">Methylation</keyword>
<keyword id="KW-0492">Microsome</keyword>
<keyword id="KW-0496">Mitochondrion</keyword>
<keyword id="KW-0539">Nucleus</keyword>
<keyword id="KW-0597">Phosphoprotein</keyword>
<keyword id="KW-0636">Prenylation</keyword>
<keyword id="KW-1185">Reference proteome</keyword>
<keyword id="KW-0677">Repeat</keyword>
<keyword id="KW-0862">Zinc</keyword>
<keyword id="KW-0863">Zinc-finger</keyword>
<reference key="1">
    <citation type="journal article" date="1998" name="Genomics">
        <title>A DnaJ-like gene, Hsj2, maps to mouse chromosome 5, at approximately 24 cM from the centromere.</title>
        <authorList>
            <person name="Royaux I."/>
            <person name="Minner F."/>
            <person name="Goffinet A.M."/>
            <person name="de Rouvroit C.L."/>
        </authorList>
    </citation>
    <scope>NUCLEOTIDE SEQUENCE [MRNA]</scope>
</reference>
<reference key="2">
    <citation type="journal article" date="2005" name="Science">
        <title>The transcriptional landscape of the mammalian genome.</title>
        <authorList>
            <person name="Carninci P."/>
            <person name="Kasukawa T."/>
            <person name="Katayama S."/>
            <person name="Gough J."/>
            <person name="Frith M.C."/>
            <person name="Maeda N."/>
            <person name="Oyama R."/>
            <person name="Ravasi T."/>
            <person name="Lenhard B."/>
            <person name="Wells C."/>
            <person name="Kodzius R."/>
            <person name="Shimokawa K."/>
            <person name="Bajic V.B."/>
            <person name="Brenner S.E."/>
            <person name="Batalov S."/>
            <person name="Forrest A.R."/>
            <person name="Zavolan M."/>
            <person name="Davis M.J."/>
            <person name="Wilming L.G."/>
            <person name="Aidinis V."/>
            <person name="Allen J.E."/>
            <person name="Ambesi-Impiombato A."/>
            <person name="Apweiler R."/>
            <person name="Aturaliya R.N."/>
            <person name="Bailey T.L."/>
            <person name="Bansal M."/>
            <person name="Baxter L."/>
            <person name="Beisel K.W."/>
            <person name="Bersano T."/>
            <person name="Bono H."/>
            <person name="Chalk A.M."/>
            <person name="Chiu K.P."/>
            <person name="Choudhary V."/>
            <person name="Christoffels A."/>
            <person name="Clutterbuck D.R."/>
            <person name="Crowe M.L."/>
            <person name="Dalla E."/>
            <person name="Dalrymple B.P."/>
            <person name="de Bono B."/>
            <person name="Della Gatta G."/>
            <person name="di Bernardo D."/>
            <person name="Down T."/>
            <person name="Engstrom P."/>
            <person name="Fagiolini M."/>
            <person name="Faulkner G."/>
            <person name="Fletcher C.F."/>
            <person name="Fukushima T."/>
            <person name="Furuno M."/>
            <person name="Futaki S."/>
            <person name="Gariboldi M."/>
            <person name="Georgii-Hemming P."/>
            <person name="Gingeras T.R."/>
            <person name="Gojobori T."/>
            <person name="Green R.E."/>
            <person name="Gustincich S."/>
            <person name="Harbers M."/>
            <person name="Hayashi Y."/>
            <person name="Hensch T.K."/>
            <person name="Hirokawa N."/>
            <person name="Hill D."/>
            <person name="Huminiecki L."/>
            <person name="Iacono M."/>
            <person name="Ikeo K."/>
            <person name="Iwama A."/>
            <person name="Ishikawa T."/>
            <person name="Jakt M."/>
            <person name="Kanapin A."/>
            <person name="Katoh M."/>
            <person name="Kawasawa Y."/>
            <person name="Kelso J."/>
            <person name="Kitamura H."/>
            <person name="Kitano H."/>
            <person name="Kollias G."/>
            <person name="Krishnan S.P."/>
            <person name="Kruger A."/>
            <person name="Kummerfeld S.K."/>
            <person name="Kurochkin I.V."/>
            <person name="Lareau L.F."/>
            <person name="Lazarevic D."/>
            <person name="Lipovich L."/>
            <person name="Liu J."/>
            <person name="Liuni S."/>
            <person name="McWilliam S."/>
            <person name="Madan Babu M."/>
            <person name="Madera M."/>
            <person name="Marchionni L."/>
            <person name="Matsuda H."/>
            <person name="Matsuzawa S."/>
            <person name="Miki H."/>
            <person name="Mignone F."/>
            <person name="Miyake S."/>
            <person name="Morris K."/>
            <person name="Mottagui-Tabar S."/>
            <person name="Mulder N."/>
            <person name="Nakano N."/>
            <person name="Nakauchi H."/>
            <person name="Ng P."/>
            <person name="Nilsson R."/>
            <person name="Nishiguchi S."/>
            <person name="Nishikawa S."/>
            <person name="Nori F."/>
            <person name="Ohara O."/>
            <person name="Okazaki Y."/>
            <person name="Orlando V."/>
            <person name="Pang K.C."/>
            <person name="Pavan W.J."/>
            <person name="Pavesi G."/>
            <person name="Pesole G."/>
            <person name="Petrovsky N."/>
            <person name="Piazza S."/>
            <person name="Reed J."/>
            <person name="Reid J.F."/>
            <person name="Ring B.Z."/>
            <person name="Ringwald M."/>
            <person name="Rost B."/>
            <person name="Ruan Y."/>
            <person name="Salzberg S.L."/>
            <person name="Sandelin A."/>
            <person name="Schneider C."/>
            <person name="Schoenbach C."/>
            <person name="Sekiguchi K."/>
            <person name="Semple C.A."/>
            <person name="Seno S."/>
            <person name="Sessa L."/>
            <person name="Sheng Y."/>
            <person name="Shibata Y."/>
            <person name="Shimada H."/>
            <person name="Shimada K."/>
            <person name="Silva D."/>
            <person name="Sinclair B."/>
            <person name="Sperling S."/>
            <person name="Stupka E."/>
            <person name="Sugiura K."/>
            <person name="Sultana R."/>
            <person name="Takenaka Y."/>
            <person name="Taki K."/>
            <person name="Tammoja K."/>
            <person name="Tan S.L."/>
            <person name="Tang S."/>
            <person name="Taylor M.S."/>
            <person name="Tegner J."/>
            <person name="Teichmann S.A."/>
            <person name="Ueda H.R."/>
            <person name="van Nimwegen E."/>
            <person name="Verardo R."/>
            <person name="Wei C.L."/>
            <person name="Yagi K."/>
            <person name="Yamanishi H."/>
            <person name="Zabarovsky E."/>
            <person name="Zhu S."/>
            <person name="Zimmer A."/>
            <person name="Hide W."/>
            <person name="Bult C."/>
            <person name="Grimmond S.M."/>
            <person name="Teasdale R.D."/>
            <person name="Liu E.T."/>
            <person name="Brusic V."/>
            <person name="Quackenbush J."/>
            <person name="Wahlestedt C."/>
            <person name="Mattick J.S."/>
            <person name="Hume D.A."/>
            <person name="Kai C."/>
            <person name="Sasaki D."/>
            <person name="Tomaru Y."/>
            <person name="Fukuda S."/>
            <person name="Kanamori-Katayama M."/>
            <person name="Suzuki M."/>
            <person name="Aoki J."/>
            <person name="Arakawa T."/>
            <person name="Iida J."/>
            <person name="Imamura K."/>
            <person name="Itoh M."/>
            <person name="Kato T."/>
            <person name="Kawaji H."/>
            <person name="Kawagashira N."/>
            <person name="Kawashima T."/>
            <person name="Kojima M."/>
            <person name="Kondo S."/>
            <person name="Konno H."/>
            <person name="Nakano K."/>
            <person name="Ninomiya N."/>
            <person name="Nishio T."/>
            <person name="Okada M."/>
            <person name="Plessy C."/>
            <person name="Shibata K."/>
            <person name="Shiraki T."/>
            <person name="Suzuki S."/>
            <person name="Tagami M."/>
            <person name="Waki K."/>
            <person name="Watahiki A."/>
            <person name="Okamura-Oho Y."/>
            <person name="Suzuki H."/>
            <person name="Kawai J."/>
            <person name="Hayashizaki Y."/>
        </authorList>
    </citation>
    <scope>NUCLEOTIDE SEQUENCE [LARGE SCALE MRNA]</scope>
    <source>
        <strain>C57BL/6J</strain>
        <tissue>Spinal cord</tissue>
    </source>
</reference>
<reference key="3">
    <citation type="journal article" date="2004" name="Genome Res.">
        <title>The status, quality, and expansion of the NIH full-length cDNA project: the Mammalian Gene Collection (MGC).</title>
        <authorList>
            <consortium name="The MGC Project Team"/>
        </authorList>
    </citation>
    <scope>NUCLEOTIDE SEQUENCE [LARGE SCALE MRNA]</scope>
    <source>
        <strain>FVB/N</strain>
        <tissue>Mammary tumor</tissue>
    </source>
</reference>
<reference key="4">
    <citation type="submission" date="2007-03" db="UniProtKB">
        <authorList>
            <person name="Lubec G."/>
            <person name="Klug S."/>
        </authorList>
    </citation>
    <scope>PROTEIN SEQUENCE OF 106-124 AND 375-389</scope>
    <scope>IDENTIFICATION BY MASS SPECTROMETRY</scope>
    <source>
        <tissue>Hippocampus</tissue>
    </source>
</reference>
<reference key="5">
    <citation type="journal article" date="2004" name="Cell Death Differ.">
        <title>hsp70-DnaJ chaperone pair prevents nitric oxide- and CHOP-induced apoptosis by inhibiting translocation of Bax to mitochondria.</title>
        <authorList>
            <person name="Gotoh T."/>
            <person name="Terada K."/>
            <person name="Oyadomari S."/>
            <person name="Mori M."/>
        </authorList>
    </citation>
    <scope>FUNCTION</scope>
    <scope>SUBUNIT</scope>
    <scope>IDENTIFICATION IN A COMPLEX WITH HSPA1B AND BAX</scope>
</reference>
<reference key="6">
    <citation type="journal article" date="2010" name="Cell">
        <title>A tissue-specific atlas of mouse protein phosphorylation and expression.</title>
        <authorList>
            <person name="Huttlin E.L."/>
            <person name="Jedrychowski M.P."/>
            <person name="Elias J.E."/>
            <person name="Goswami T."/>
            <person name="Rad R."/>
            <person name="Beausoleil S.A."/>
            <person name="Villen J."/>
            <person name="Haas W."/>
            <person name="Sowa M.E."/>
            <person name="Gygi S.P."/>
        </authorList>
    </citation>
    <scope>PHOSPHORYLATION [LARGE SCALE ANALYSIS] AT SER-335</scope>
    <scope>IDENTIFICATION BY MASS SPECTROMETRY [LARGE SCALE ANALYSIS]</scope>
    <source>
        <tissue>Brain</tissue>
        <tissue>Brown adipose tissue</tissue>
        <tissue>Heart</tissue>
        <tissue>Kidney</tissue>
        <tissue>Liver</tissue>
        <tissue>Lung</tissue>
        <tissue>Pancreas</tissue>
        <tissue>Spleen</tissue>
        <tissue>Testis</tissue>
    </source>
</reference>
<feature type="chain" id="PRO_0000071009" description="DnaJ homolog subfamily A member 1">
    <location>
        <begin position="1"/>
        <end position="394"/>
    </location>
</feature>
<feature type="propeptide" id="PRO_0000396753" description="Removed in mature form" evidence="1">
    <location>
        <begin position="395"/>
        <end position="397"/>
    </location>
</feature>
<feature type="domain" description="J">
    <location>
        <begin position="6"/>
        <end position="68"/>
    </location>
</feature>
<feature type="repeat" description="CXXCXGXG motif">
    <location>
        <begin position="134"/>
        <end position="141"/>
    </location>
</feature>
<feature type="repeat" description="CXXCXGXG motif">
    <location>
        <begin position="150"/>
        <end position="157"/>
    </location>
</feature>
<feature type="repeat" description="CXXCXGXG motif">
    <location>
        <begin position="177"/>
        <end position="184"/>
    </location>
</feature>
<feature type="repeat" description="CXXCXGXG motif">
    <location>
        <begin position="193"/>
        <end position="200"/>
    </location>
</feature>
<feature type="zinc finger region" description="CR-type">
    <location>
        <begin position="121"/>
        <end position="205"/>
    </location>
</feature>
<feature type="region of interest" description="Disordered" evidence="3">
    <location>
        <begin position="352"/>
        <end position="397"/>
    </location>
</feature>
<feature type="compositionally biased region" description="Acidic residues" evidence="3">
    <location>
        <begin position="353"/>
        <end position="365"/>
    </location>
</feature>
<feature type="binding site" evidence="1">
    <location>
        <position position="134"/>
    </location>
    <ligand>
        <name>Zn(2+)</name>
        <dbReference type="ChEBI" id="CHEBI:29105"/>
        <label>1</label>
    </ligand>
</feature>
<feature type="binding site" evidence="1">
    <location>
        <position position="137"/>
    </location>
    <ligand>
        <name>Zn(2+)</name>
        <dbReference type="ChEBI" id="CHEBI:29105"/>
        <label>1</label>
    </ligand>
</feature>
<feature type="binding site" evidence="1">
    <location>
        <position position="150"/>
    </location>
    <ligand>
        <name>Zn(2+)</name>
        <dbReference type="ChEBI" id="CHEBI:29105"/>
        <label>2</label>
    </ligand>
</feature>
<feature type="binding site" evidence="1">
    <location>
        <position position="153"/>
    </location>
    <ligand>
        <name>Zn(2+)</name>
        <dbReference type="ChEBI" id="CHEBI:29105"/>
        <label>2</label>
    </ligand>
</feature>
<feature type="binding site" evidence="1">
    <location>
        <position position="177"/>
    </location>
    <ligand>
        <name>Zn(2+)</name>
        <dbReference type="ChEBI" id="CHEBI:29105"/>
        <label>2</label>
    </ligand>
</feature>
<feature type="binding site" evidence="1">
    <location>
        <position position="180"/>
    </location>
    <ligand>
        <name>Zn(2+)</name>
        <dbReference type="ChEBI" id="CHEBI:29105"/>
        <label>2</label>
    </ligand>
</feature>
<feature type="binding site" evidence="1">
    <location>
        <position position="193"/>
    </location>
    <ligand>
        <name>Zn(2+)</name>
        <dbReference type="ChEBI" id="CHEBI:29105"/>
        <label>1</label>
    </ligand>
</feature>
<feature type="binding site" evidence="1">
    <location>
        <position position="196"/>
    </location>
    <ligand>
        <name>Zn(2+)</name>
        <dbReference type="ChEBI" id="CHEBI:29105"/>
        <label>1</label>
    </ligand>
</feature>
<feature type="modified residue" description="N6-acetyllysine" evidence="2">
    <location>
        <position position="66"/>
    </location>
</feature>
<feature type="modified residue" description="Phosphoserine" evidence="2">
    <location>
        <position position="83"/>
    </location>
</feature>
<feature type="modified residue" description="Phosphoserine" evidence="5">
    <location>
        <position position="335"/>
    </location>
</feature>
<feature type="modified residue" description="Phosphotyrosine" evidence="2">
    <location>
        <position position="381"/>
    </location>
</feature>
<feature type="modified residue" description="Cysteine methyl ester" evidence="1">
    <location>
        <position position="394"/>
    </location>
</feature>
<feature type="lipid moiety-binding region" description="S-farnesyl cysteine" evidence="1">
    <location>
        <position position="394"/>
    </location>
</feature>
<dbReference type="EMBL" id="AF055664">
    <property type="protein sequence ID" value="AAC78597.1"/>
    <property type="molecule type" value="mRNA"/>
</dbReference>
<dbReference type="EMBL" id="AK083046">
    <property type="protein sequence ID" value="BAC38744.1"/>
    <property type="molecule type" value="mRNA"/>
</dbReference>
<dbReference type="EMBL" id="BC057876">
    <property type="protein sequence ID" value="AAH57876.1"/>
    <property type="molecule type" value="mRNA"/>
</dbReference>
<dbReference type="CCDS" id="CCDS18049.1"/>
<dbReference type="RefSeq" id="NP_001158143.1">
    <property type="nucleotide sequence ID" value="NM_001164671.2"/>
</dbReference>
<dbReference type="RefSeq" id="NP_001158144.1">
    <property type="nucleotide sequence ID" value="NM_001164672.2"/>
</dbReference>
<dbReference type="RefSeq" id="NP_032324.1">
    <property type="nucleotide sequence ID" value="NM_008298.6"/>
</dbReference>
<dbReference type="BMRB" id="P63037"/>
<dbReference type="SMR" id="P63037"/>
<dbReference type="BioGRID" id="200446">
    <property type="interactions" value="39"/>
</dbReference>
<dbReference type="DIP" id="DIP-32350N"/>
<dbReference type="FunCoup" id="P63037">
    <property type="interactions" value="3103"/>
</dbReference>
<dbReference type="IntAct" id="P63037">
    <property type="interactions" value="15"/>
</dbReference>
<dbReference type="MINT" id="P63037"/>
<dbReference type="STRING" id="10090.ENSMUSP00000129730"/>
<dbReference type="GlyGen" id="P63037">
    <property type="glycosylation" value="2 sites, 1 N-linked glycan (1 site), 1 O-linked glycan (1 site)"/>
</dbReference>
<dbReference type="iPTMnet" id="P63037"/>
<dbReference type="PhosphoSitePlus" id="P63037"/>
<dbReference type="SwissPalm" id="P63037"/>
<dbReference type="jPOST" id="P63037"/>
<dbReference type="PaxDb" id="10090-ENSMUSP00000030118"/>
<dbReference type="PeptideAtlas" id="P63037"/>
<dbReference type="ProteomicsDB" id="279741"/>
<dbReference type="Pumba" id="P63037"/>
<dbReference type="Antibodypedia" id="675">
    <property type="antibodies" value="292 antibodies from 32 providers"/>
</dbReference>
<dbReference type="DNASU" id="15502"/>
<dbReference type="Ensembl" id="ENSMUST00000030118.10">
    <property type="protein sequence ID" value="ENSMUSP00000030118.4"/>
    <property type="gene ID" value="ENSMUSG00000028410.14"/>
</dbReference>
<dbReference type="Ensembl" id="ENSMUST00000164233.8">
    <property type="protein sequence ID" value="ENSMUSP00000129730.2"/>
    <property type="gene ID" value="ENSMUSG00000028410.14"/>
</dbReference>
<dbReference type="GeneID" id="15502"/>
<dbReference type="KEGG" id="mmu:15502"/>
<dbReference type="UCSC" id="uc008sht.2">
    <property type="organism name" value="mouse"/>
</dbReference>
<dbReference type="AGR" id="MGI:1270129"/>
<dbReference type="CTD" id="3301"/>
<dbReference type="MGI" id="MGI:1270129">
    <property type="gene designation" value="Dnaja1"/>
</dbReference>
<dbReference type="VEuPathDB" id="HostDB:ENSMUSG00000028410"/>
<dbReference type="eggNOG" id="KOG0712">
    <property type="taxonomic scope" value="Eukaryota"/>
</dbReference>
<dbReference type="GeneTree" id="ENSGT00940000153558"/>
<dbReference type="HOGENOM" id="CLU_017633_10_0_1"/>
<dbReference type="InParanoid" id="P63037"/>
<dbReference type="OMA" id="NALCTKC"/>
<dbReference type="OrthoDB" id="550424at2759"/>
<dbReference type="PhylomeDB" id="P63037"/>
<dbReference type="TreeFam" id="TF105141"/>
<dbReference type="Reactome" id="R-MMU-3371497">
    <property type="pathway name" value="HSP90 chaperone cycle for steroid hormone receptors (SHR) in the presence of ligand"/>
</dbReference>
<dbReference type="Reactome" id="R-MMU-9841251">
    <property type="pathway name" value="Mitochondrial unfolded protein response (UPRmt)"/>
</dbReference>
<dbReference type="BioGRID-ORCS" id="15502">
    <property type="hits" value="12 hits in 81 CRISPR screens"/>
</dbReference>
<dbReference type="CD-CODE" id="CE726F99">
    <property type="entry name" value="Postsynaptic density"/>
</dbReference>
<dbReference type="ChiTaRS" id="Dnaja1">
    <property type="organism name" value="mouse"/>
</dbReference>
<dbReference type="PRO" id="PR:P63037"/>
<dbReference type="Proteomes" id="UP000000589">
    <property type="component" value="Chromosome 4"/>
</dbReference>
<dbReference type="RNAct" id="P63037">
    <property type="molecule type" value="protein"/>
</dbReference>
<dbReference type="Bgee" id="ENSMUSG00000028410">
    <property type="expression patterns" value="Expressed in undifferentiated genital tubercle and 281 other cell types or tissues"/>
</dbReference>
<dbReference type="ExpressionAtlas" id="P63037">
    <property type="expression patterns" value="baseline and differential"/>
</dbReference>
<dbReference type="GO" id="GO:0005783">
    <property type="term" value="C:endoplasmic reticulum"/>
    <property type="evidence" value="ECO:0007669"/>
    <property type="project" value="UniProtKB-KW"/>
</dbReference>
<dbReference type="GO" id="GO:0016020">
    <property type="term" value="C:membrane"/>
    <property type="evidence" value="ECO:0007669"/>
    <property type="project" value="UniProtKB-SubCell"/>
</dbReference>
<dbReference type="GO" id="GO:0005739">
    <property type="term" value="C:mitochondrion"/>
    <property type="evidence" value="ECO:0007669"/>
    <property type="project" value="UniProtKB-SubCell"/>
</dbReference>
<dbReference type="GO" id="GO:0005634">
    <property type="term" value="C:nucleus"/>
    <property type="evidence" value="ECO:0007669"/>
    <property type="project" value="UniProtKB-SubCell"/>
</dbReference>
<dbReference type="GO" id="GO:0048471">
    <property type="term" value="C:perinuclear region of cytoplasm"/>
    <property type="evidence" value="ECO:0007669"/>
    <property type="project" value="UniProtKB-SubCell"/>
</dbReference>
<dbReference type="GO" id="GO:0005524">
    <property type="term" value="F:ATP binding"/>
    <property type="evidence" value="ECO:0007669"/>
    <property type="project" value="InterPro"/>
</dbReference>
<dbReference type="GO" id="GO:0001671">
    <property type="term" value="F:ATPase activator activity"/>
    <property type="evidence" value="ECO:0000250"/>
    <property type="project" value="UniProtKB"/>
</dbReference>
<dbReference type="GO" id="GO:0030544">
    <property type="term" value="F:Hsp70 protein binding"/>
    <property type="evidence" value="ECO:0000250"/>
    <property type="project" value="UniProtKB"/>
</dbReference>
<dbReference type="GO" id="GO:0050750">
    <property type="term" value="F:low-density lipoprotein particle receptor binding"/>
    <property type="evidence" value="ECO:0000266"/>
    <property type="project" value="MGI"/>
</dbReference>
<dbReference type="GO" id="GO:0051087">
    <property type="term" value="F:protein-folding chaperone binding"/>
    <property type="evidence" value="ECO:0000250"/>
    <property type="project" value="UniProtKB"/>
</dbReference>
<dbReference type="GO" id="GO:0051082">
    <property type="term" value="F:unfolded protein binding"/>
    <property type="evidence" value="ECO:0007669"/>
    <property type="project" value="InterPro"/>
</dbReference>
<dbReference type="GO" id="GO:0008270">
    <property type="term" value="F:zinc ion binding"/>
    <property type="evidence" value="ECO:0007669"/>
    <property type="project" value="UniProtKB-KW"/>
</dbReference>
<dbReference type="GO" id="GO:0030521">
    <property type="term" value="P:androgen receptor signaling pathway"/>
    <property type="evidence" value="ECO:0000315"/>
    <property type="project" value="MGI"/>
</dbReference>
<dbReference type="GO" id="GO:0030317">
    <property type="term" value="P:flagellated sperm motility"/>
    <property type="evidence" value="ECO:0000315"/>
    <property type="project" value="MGI"/>
</dbReference>
<dbReference type="GO" id="GO:0043066">
    <property type="term" value="P:negative regulation of apoptotic process"/>
    <property type="evidence" value="ECO:0000250"/>
    <property type="project" value="UniProtKB"/>
</dbReference>
<dbReference type="GO" id="GO:0043508">
    <property type="term" value="P:negative regulation of JUN kinase activity"/>
    <property type="evidence" value="ECO:0000250"/>
    <property type="project" value="UniProtKB"/>
</dbReference>
<dbReference type="GO" id="GO:0043065">
    <property type="term" value="P:positive regulation of apoptotic process"/>
    <property type="evidence" value="ECO:0000250"/>
    <property type="project" value="UniProtKB"/>
</dbReference>
<dbReference type="GO" id="GO:0006457">
    <property type="term" value="P:protein folding"/>
    <property type="evidence" value="ECO:0007669"/>
    <property type="project" value="InterPro"/>
</dbReference>
<dbReference type="GO" id="GO:0070585">
    <property type="term" value="P:protein localization to mitochondrion"/>
    <property type="evidence" value="ECO:0000250"/>
    <property type="project" value="UniProtKB"/>
</dbReference>
<dbReference type="GO" id="GO:0051223">
    <property type="term" value="P:regulation of protein transport"/>
    <property type="evidence" value="ECO:0000250"/>
    <property type="project" value="UniProtKB"/>
</dbReference>
<dbReference type="GO" id="GO:0009408">
    <property type="term" value="P:response to heat"/>
    <property type="evidence" value="ECO:0007669"/>
    <property type="project" value="InterPro"/>
</dbReference>
<dbReference type="GO" id="GO:0007283">
    <property type="term" value="P:spermatogenesis"/>
    <property type="evidence" value="ECO:0000315"/>
    <property type="project" value="MGI"/>
</dbReference>
<dbReference type="CDD" id="cd06257">
    <property type="entry name" value="DnaJ"/>
    <property type="match status" value="1"/>
</dbReference>
<dbReference type="CDD" id="cd10747">
    <property type="entry name" value="DnaJ_C"/>
    <property type="match status" value="1"/>
</dbReference>
<dbReference type="CDD" id="cd10719">
    <property type="entry name" value="DnaJ_zf"/>
    <property type="match status" value="1"/>
</dbReference>
<dbReference type="FunFam" id="2.60.260.20:FF:000068">
    <property type="entry name" value="Chaperone protein dnaJ 3"/>
    <property type="match status" value="1"/>
</dbReference>
<dbReference type="FunFam" id="2.10.230.10:FF:000005">
    <property type="entry name" value="DnaJ homolog subfamily A member 1"/>
    <property type="match status" value="1"/>
</dbReference>
<dbReference type="FunFam" id="1.10.287.110:FF:000014">
    <property type="entry name" value="dnaJ homolog subfamily A member 1"/>
    <property type="match status" value="1"/>
</dbReference>
<dbReference type="FunFam" id="2.60.260.20:FF:000003">
    <property type="entry name" value="DnaJ subfamily A member 2"/>
    <property type="match status" value="1"/>
</dbReference>
<dbReference type="Gene3D" id="1.10.287.110">
    <property type="entry name" value="DnaJ domain"/>
    <property type="match status" value="1"/>
</dbReference>
<dbReference type="Gene3D" id="2.10.230.10">
    <property type="entry name" value="Heat shock protein DnaJ, cysteine-rich domain"/>
    <property type="match status" value="1"/>
</dbReference>
<dbReference type="Gene3D" id="2.60.260.20">
    <property type="entry name" value="Urease metallochaperone UreE, N-terminal domain"/>
    <property type="match status" value="2"/>
</dbReference>
<dbReference type="HAMAP" id="MF_01152">
    <property type="entry name" value="DnaJ"/>
    <property type="match status" value="1"/>
</dbReference>
<dbReference type="InterPro" id="IPR012724">
    <property type="entry name" value="DnaJ"/>
</dbReference>
<dbReference type="InterPro" id="IPR002939">
    <property type="entry name" value="DnaJ_C"/>
</dbReference>
<dbReference type="InterPro" id="IPR001623">
    <property type="entry name" value="DnaJ_domain"/>
</dbReference>
<dbReference type="InterPro" id="IPR018253">
    <property type="entry name" value="DnaJ_domain_CS"/>
</dbReference>
<dbReference type="InterPro" id="IPR044713">
    <property type="entry name" value="DNJA1/2-like"/>
</dbReference>
<dbReference type="InterPro" id="IPR008971">
    <property type="entry name" value="HSP40/DnaJ_pept-bd"/>
</dbReference>
<dbReference type="InterPro" id="IPR001305">
    <property type="entry name" value="HSP_DnaJ_Cys-rich_dom"/>
</dbReference>
<dbReference type="InterPro" id="IPR036410">
    <property type="entry name" value="HSP_DnaJ_Cys-rich_dom_sf"/>
</dbReference>
<dbReference type="InterPro" id="IPR036869">
    <property type="entry name" value="J_dom_sf"/>
</dbReference>
<dbReference type="PANTHER" id="PTHR43888">
    <property type="entry name" value="DNAJ-LIKE-2, ISOFORM A-RELATED"/>
    <property type="match status" value="1"/>
</dbReference>
<dbReference type="Pfam" id="PF00226">
    <property type="entry name" value="DnaJ"/>
    <property type="match status" value="1"/>
</dbReference>
<dbReference type="Pfam" id="PF01556">
    <property type="entry name" value="DnaJ_C"/>
    <property type="match status" value="1"/>
</dbReference>
<dbReference type="Pfam" id="PF00684">
    <property type="entry name" value="DnaJ_CXXCXGXG"/>
    <property type="match status" value="1"/>
</dbReference>
<dbReference type="PRINTS" id="PR00625">
    <property type="entry name" value="JDOMAIN"/>
</dbReference>
<dbReference type="SMART" id="SM00271">
    <property type="entry name" value="DnaJ"/>
    <property type="match status" value="1"/>
</dbReference>
<dbReference type="SUPFAM" id="SSF46565">
    <property type="entry name" value="Chaperone J-domain"/>
    <property type="match status" value="1"/>
</dbReference>
<dbReference type="SUPFAM" id="SSF57938">
    <property type="entry name" value="DnaJ/Hsp40 cysteine-rich domain"/>
    <property type="match status" value="1"/>
</dbReference>
<dbReference type="SUPFAM" id="SSF49493">
    <property type="entry name" value="HSP40/DnaJ peptide-binding domain"/>
    <property type="match status" value="2"/>
</dbReference>
<dbReference type="PROSITE" id="PS00636">
    <property type="entry name" value="DNAJ_1"/>
    <property type="match status" value="1"/>
</dbReference>
<dbReference type="PROSITE" id="PS50076">
    <property type="entry name" value="DNAJ_2"/>
    <property type="match status" value="1"/>
</dbReference>
<dbReference type="PROSITE" id="PS51188">
    <property type="entry name" value="ZF_CR"/>
    <property type="match status" value="1"/>
</dbReference>
<organism>
    <name type="scientific">Mus musculus</name>
    <name type="common">Mouse</name>
    <dbReference type="NCBI Taxonomy" id="10090"/>
    <lineage>
        <taxon>Eukaryota</taxon>
        <taxon>Metazoa</taxon>
        <taxon>Chordata</taxon>
        <taxon>Craniata</taxon>
        <taxon>Vertebrata</taxon>
        <taxon>Euteleostomi</taxon>
        <taxon>Mammalia</taxon>
        <taxon>Eutheria</taxon>
        <taxon>Euarchontoglires</taxon>
        <taxon>Glires</taxon>
        <taxon>Rodentia</taxon>
        <taxon>Myomorpha</taxon>
        <taxon>Muroidea</taxon>
        <taxon>Muridae</taxon>
        <taxon>Murinae</taxon>
        <taxon>Mus</taxon>
        <taxon>Mus</taxon>
    </lineage>
</organism>
<proteinExistence type="evidence at protein level"/>
<accession>P63037</accession>
<accession>P54102</accession>
<comment type="function">
    <text evidence="1 4">Co-chaperone for HSPA8/Hsc70. Plays a role in protein transport into mitochondria via its role as co-chaperone. Stimulates ATP hydrolysis, but not the folding of unfolded proteins mediated by HSPA1A (in vitro). Promotes apoptosis in response to cellular stress mediated by exposure to anisomycin or UV (By similarity). Functions as co-chaperone for HSPA1B and negatively regulates the translocation of BAX from the cytosol to mitochondria in response to cellular stress, thereby protecting cells against apoptosis.</text>
</comment>
<comment type="subunit">
    <text evidence="2 4">Identified in a complex with HSPA1B and BAX (PubMed:14752510). Interacts with RNF207 (By similarity).</text>
</comment>
<comment type="subcellular location">
    <subcellularLocation>
        <location evidence="1">Membrane</location>
        <topology evidence="1">Lipid-anchor</topology>
    </subcellularLocation>
    <subcellularLocation>
        <location evidence="1">Cytoplasm</location>
    </subcellularLocation>
    <subcellularLocation>
        <location evidence="1">Microsome</location>
    </subcellularLocation>
    <subcellularLocation>
        <location evidence="1">Mitochondrion</location>
    </subcellularLocation>
    <subcellularLocation>
        <location evidence="1">Nucleus</location>
    </subcellularLocation>
    <subcellularLocation>
        <location evidence="1">Cytoplasm</location>
        <location evidence="1">Perinuclear region</location>
    </subcellularLocation>
    <text evidence="1">Primarily cytoplasmic and associated with microsomes. A minor proportion is associated with nuclei and mitochondria (By similarity).</text>
</comment>
<protein>
    <recommendedName>
        <fullName>DnaJ homolog subfamily A member 1</fullName>
    </recommendedName>
    <alternativeName>
        <fullName>DnaJ protein homolog 2</fullName>
    </alternativeName>
    <alternativeName>
        <fullName>Heat shock 40 kDa protein 4</fullName>
    </alternativeName>
    <alternativeName>
        <fullName>Heat shock protein J2</fullName>
        <shortName>HSJ-2</shortName>
    </alternativeName>
</protein>
<evidence type="ECO:0000250" key="1"/>
<evidence type="ECO:0000250" key="2">
    <source>
        <dbReference type="UniProtKB" id="P31689"/>
    </source>
</evidence>
<evidence type="ECO:0000256" key="3">
    <source>
        <dbReference type="SAM" id="MobiDB-lite"/>
    </source>
</evidence>
<evidence type="ECO:0000269" key="4">
    <source>
    </source>
</evidence>
<evidence type="ECO:0007744" key="5">
    <source>
    </source>
</evidence>
<gene>
    <name type="primary">Dnaja1</name>
    <name type="synonym">Dnaj2</name>
    <name type="synonym">Hsj2</name>
    <name type="synonym">Hspf4</name>
</gene>